<sequence length="379" mass="42985">MEDAHHHHWTMVERRGTQLWASGRPFIIHGFNTYWLMSFAADQATRLRVTAAIAEAGLNVCCTWAFSDGGYRALQTAPFHYDEDVFRALDFVVSEARRHNMRLILSLCNNWEDYGGKAQYVRWGKEAGLDLTSEDDFFSDPTIKSYYKAFVEAVVTRINTVTNETYKDDPTILAWELINEPRCPSDPSGDTLQAWMEEMASYVKSIDPVHLLEIGIEGFYGPSIPELLPVNPDEYSGHAGIDFIRNHQAPGIDLASIHVYSDIWLPQSIKENHLQFVDKWMQQHIDDAANLLGMPIVVGEFGVSVKDGKFGNEFREDFMKTIYRIFLSSWKEGVIGGGCLLWQLFPEGAEHMDDGYAVIFAKSPSTLSLLANHLRCLEC</sequence>
<feature type="chain" id="PRO_0000277488" description="Mannan endo-1,4-beta-mannosidase 7">
    <location>
        <begin position="1"/>
        <end position="379"/>
    </location>
</feature>
<feature type="active site" description="Proton donor" evidence="2">
    <location>
        <position position="180"/>
    </location>
</feature>
<feature type="active site" description="Nucleophile" evidence="2">
    <location>
        <position position="300"/>
    </location>
</feature>
<feature type="binding site" evidence="1">
    <location>
        <position position="64"/>
    </location>
    <ligand>
        <name>substrate</name>
    </ligand>
</feature>
<feature type="binding site" evidence="1">
    <location>
        <position position="179"/>
    </location>
    <ligand>
        <name>substrate</name>
    </ligand>
</feature>
<feature type="binding site" evidence="1">
    <location>
        <position position="260"/>
    </location>
    <ligand>
        <name>substrate</name>
    </ligand>
</feature>
<feature type="binding site" evidence="1">
    <location>
        <position position="342"/>
    </location>
    <ligand>
        <name>substrate</name>
    </ligand>
</feature>
<gene>
    <name type="primary">MAN7</name>
    <name type="ordered locus">Os11g0118200</name>
    <name type="ordered locus">LOC_Os11g02600</name>
</gene>
<accession>Q2RBB1</accession>
<keyword id="KW-0326">Glycosidase</keyword>
<keyword id="KW-0378">Hydrolase</keyword>
<keyword id="KW-1185">Reference proteome</keyword>
<proteinExistence type="evidence at transcript level"/>
<comment type="catalytic activity">
    <reaction>
        <text>Random hydrolysis of (1-&gt;4)-beta-D-mannosidic linkages in mannans, galactomannans and glucomannans.</text>
        <dbReference type="EC" id="3.2.1.78"/>
    </reaction>
</comment>
<comment type="tissue specificity">
    <text>Expression not detected.</text>
</comment>
<comment type="similarity">
    <text evidence="3">Belongs to the glycosyl hydrolase 5 (cellulase A) family.</text>
</comment>
<comment type="sequence caution" evidence="3">
    <conflict type="erroneous gene model prediction">
        <sequence resource="EMBL-CDS" id="ABA91172"/>
    </conflict>
</comment>
<comment type="sequence caution" evidence="3">
    <conflict type="erroneous gene model prediction">
        <sequence resource="EMBL-CDS" id="BAF27440"/>
    </conflict>
</comment>
<dbReference type="EC" id="3.2.1.78"/>
<dbReference type="EMBL" id="DP000010">
    <property type="protein sequence ID" value="ABA91172.2"/>
    <property type="status" value="ALT_SEQ"/>
    <property type="molecule type" value="Genomic_DNA"/>
</dbReference>
<dbReference type="EMBL" id="AP008217">
    <property type="protein sequence ID" value="BAF27440.1"/>
    <property type="status" value="ALT_SEQ"/>
    <property type="molecule type" value="Genomic_DNA"/>
</dbReference>
<dbReference type="EMBL" id="AP014967">
    <property type="status" value="NOT_ANNOTATED_CDS"/>
    <property type="molecule type" value="Genomic_DNA"/>
</dbReference>
<dbReference type="RefSeq" id="XP_015616432.1">
    <property type="nucleotide sequence ID" value="XM_015760946.1"/>
</dbReference>
<dbReference type="SMR" id="Q2RBB1"/>
<dbReference type="FunCoup" id="Q2RBB1">
    <property type="interactions" value="56"/>
</dbReference>
<dbReference type="CAZy" id="GH5">
    <property type="family name" value="Glycoside Hydrolase Family 5"/>
</dbReference>
<dbReference type="PaxDb" id="39947-Q2RBB1"/>
<dbReference type="KEGG" id="dosa:Os11g0118200"/>
<dbReference type="InParanoid" id="Q2RBB1"/>
<dbReference type="OrthoDB" id="406631at2759"/>
<dbReference type="Proteomes" id="UP000000763">
    <property type="component" value="Chromosome 11"/>
</dbReference>
<dbReference type="Proteomes" id="UP000059680">
    <property type="component" value="Chromosome 11"/>
</dbReference>
<dbReference type="GO" id="GO:0016985">
    <property type="term" value="F:mannan endo-1,4-beta-mannosidase activity"/>
    <property type="evidence" value="ECO:0000318"/>
    <property type="project" value="GO_Central"/>
</dbReference>
<dbReference type="GO" id="GO:0000272">
    <property type="term" value="P:polysaccharide catabolic process"/>
    <property type="evidence" value="ECO:0007669"/>
    <property type="project" value="InterPro"/>
</dbReference>
<dbReference type="FunFam" id="3.20.20.80:FF:000012">
    <property type="entry name" value="Mannan endo-1,4-beta-mannosidase 6"/>
    <property type="match status" value="1"/>
</dbReference>
<dbReference type="Gene3D" id="3.20.20.80">
    <property type="entry name" value="Glycosidases"/>
    <property type="match status" value="1"/>
</dbReference>
<dbReference type="InterPro" id="IPR001547">
    <property type="entry name" value="Glyco_hydro_5"/>
</dbReference>
<dbReference type="InterPro" id="IPR018087">
    <property type="entry name" value="Glyco_hydro_5_CS"/>
</dbReference>
<dbReference type="InterPro" id="IPR017853">
    <property type="entry name" value="Glycoside_hydrolase_SF"/>
</dbReference>
<dbReference type="InterPro" id="IPR045053">
    <property type="entry name" value="MAN-like"/>
</dbReference>
<dbReference type="PANTHER" id="PTHR31451">
    <property type="match status" value="1"/>
</dbReference>
<dbReference type="PANTHER" id="PTHR31451:SF46">
    <property type="entry name" value="MANNAN ENDO-1,4-BETA-MANNOSIDASE 8"/>
    <property type="match status" value="1"/>
</dbReference>
<dbReference type="Pfam" id="PF00150">
    <property type="entry name" value="Cellulase"/>
    <property type="match status" value="1"/>
</dbReference>
<dbReference type="SUPFAM" id="SSF51445">
    <property type="entry name" value="(Trans)glycosidases"/>
    <property type="match status" value="1"/>
</dbReference>
<dbReference type="PROSITE" id="PS00659">
    <property type="entry name" value="GLYCOSYL_HYDROL_F5"/>
    <property type="match status" value="1"/>
</dbReference>
<organism>
    <name type="scientific">Oryza sativa subsp. japonica</name>
    <name type="common">Rice</name>
    <dbReference type="NCBI Taxonomy" id="39947"/>
    <lineage>
        <taxon>Eukaryota</taxon>
        <taxon>Viridiplantae</taxon>
        <taxon>Streptophyta</taxon>
        <taxon>Embryophyta</taxon>
        <taxon>Tracheophyta</taxon>
        <taxon>Spermatophyta</taxon>
        <taxon>Magnoliopsida</taxon>
        <taxon>Liliopsida</taxon>
        <taxon>Poales</taxon>
        <taxon>Poaceae</taxon>
        <taxon>BOP clade</taxon>
        <taxon>Oryzoideae</taxon>
        <taxon>Oryzeae</taxon>
        <taxon>Oryzinae</taxon>
        <taxon>Oryza</taxon>
        <taxon>Oryza sativa</taxon>
    </lineage>
</organism>
<evidence type="ECO:0000250" key="1">
    <source>
        <dbReference type="UniProtKB" id="B4XC07"/>
    </source>
</evidence>
<evidence type="ECO:0000250" key="2">
    <source>
        <dbReference type="UniProtKB" id="Q99036"/>
    </source>
</evidence>
<evidence type="ECO:0000305" key="3"/>
<reference key="1">
    <citation type="journal article" date="2005" name="BMC Biol.">
        <title>The sequence of rice chromosomes 11 and 12, rich in disease resistance genes and recent gene duplications.</title>
        <authorList>
            <consortium name="The rice chromosomes 11 and 12 sequencing consortia"/>
        </authorList>
    </citation>
    <scope>NUCLEOTIDE SEQUENCE [LARGE SCALE GENOMIC DNA]</scope>
    <source>
        <strain>cv. Nipponbare</strain>
    </source>
</reference>
<reference key="2">
    <citation type="journal article" date="2005" name="Nature">
        <title>The map-based sequence of the rice genome.</title>
        <authorList>
            <consortium name="International rice genome sequencing project (IRGSP)"/>
        </authorList>
    </citation>
    <scope>NUCLEOTIDE SEQUENCE [LARGE SCALE GENOMIC DNA]</scope>
    <source>
        <strain>cv. Nipponbare</strain>
    </source>
</reference>
<reference key="3">
    <citation type="journal article" date="2008" name="Nucleic Acids Res.">
        <title>The rice annotation project database (RAP-DB): 2008 update.</title>
        <authorList>
            <consortium name="The rice annotation project (RAP)"/>
        </authorList>
    </citation>
    <scope>GENOME REANNOTATION</scope>
    <source>
        <strain>cv. Nipponbare</strain>
    </source>
</reference>
<reference key="4">
    <citation type="journal article" date="2013" name="Rice">
        <title>Improvement of the Oryza sativa Nipponbare reference genome using next generation sequence and optical map data.</title>
        <authorList>
            <person name="Kawahara Y."/>
            <person name="de la Bastide M."/>
            <person name="Hamilton J.P."/>
            <person name="Kanamori H."/>
            <person name="McCombie W.R."/>
            <person name="Ouyang S."/>
            <person name="Schwartz D.C."/>
            <person name="Tanaka T."/>
            <person name="Wu J."/>
            <person name="Zhou S."/>
            <person name="Childs K.L."/>
            <person name="Davidson R.M."/>
            <person name="Lin H."/>
            <person name="Quesada-Ocampo L."/>
            <person name="Vaillancourt B."/>
            <person name="Sakai H."/>
            <person name="Lee S.S."/>
            <person name="Kim J."/>
            <person name="Numa H."/>
            <person name="Itoh T."/>
            <person name="Buell C.R."/>
            <person name="Matsumoto T."/>
        </authorList>
    </citation>
    <scope>GENOME REANNOTATION</scope>
    <source>
        <strain>cv. Nipponbare</strain>
    </source>
</reference>
<reference key="5">
    <citation type="journal article" date="2007" name="Funct. Integr. Genomics">
        <title>The endo-beta-mannanase gene families in Arabidopsis, rice, and poplar.</title>
        <authorList>
            <person name="Yuan J.S."/>
            <person name="Yang X."/>
            <person name="Lai J."/>
            <person name="Lin H."/>
            <person name="Cheng Z.-M."/>
            <person name="Nonogaki H."/>
            <person name="Chen F."/>
        </authorList>
    </citation>
    <scope>GENE FAMILY</scope>
</reference>
<name>MAN7_ORYSJ</name>
<protein>
    <recommendedName>
        <fullName>Mannan endo-1,4-beta-mannosidase 7</fullName>
        <ecNumber>3.2.1.78</ecNumber>
    </recommendedName>
    <alternativeName>
        <fullName>Beta-mannanase 7</fullName>
    </alternativeName>
    <alternativeName>
        <fullName>Endo-beta-1,4-mannanase 7</fullName>
    </alternativeName>
    <alternativeName>
        <fullName>OsMAN7</fullName>
    </alternativeName>
</protein>